<keyword id="KW-0223">Dioxygenase</keyword>
<keyword id="KW-0227">DNA damage</keyword>
<keyword id="KW-0234">DNA repair</keyword>
<keyword id="KW-0408">Iron</keyword>
<keyword id="KW-0460">Magnesium</keyword>
<keyword id="KW-0479">Metal-binding</keyword>
<keyword id="KW-0539">Nucleus</keyword>
<keyword id="KW-0560">Oxidoreductase</keyword>
<keyword id="KW-1185">Reference proteome</keyword>
<name>ALKB2_BOVIN</name>
<dbReference type="EC" id="1.14.11.33" evidence="1"/>
<dbReference type="EMBL" id="BT021573">
    <property type="protein sequence ID" value="AAX46420.1"/>
    <property type="molecule type" value="mRNA"/>
</dbReference>
<dbReference type="EMBL" id="BC120178">
    <property type="protein sequence ID" value="AAI20179.1"/>
    <property type="molecule type" value="mRNA"/>
</dbReference>
<dbReference type="RefSeq" id="NP_001019687.1">
    <property type="nucleotide sequence ID" value="NM_001024516.1"/>
</dbReference>
<dbReference type="RefSeq" id="XP_005217847.2">
    <property type="nucleotide sequence ID" value="XM_005217790.5"/>
</dbReference>
<dbReference type="RefSeq" id="XP_005217848.2">
    <property type="nucleotide sequence ID" value="XM_005217791.5"/>
</dbReference>
<dbReference type="RefSeq" id="XP_005217849.2">
    <property type="nucleotide sequence ID" value="XM_005217792.5"/>
</dbReference>
<dbReference type="SMR" id="Q58DM4"/>
<dbReference type="FunCoup" id="Q58DM4">
    <property type="interactions" value="621"/>
</dbReference>
<dbReference type="STRING" id="9913.ENSBTAP00000062950"/>
<dbReference type="PaxDb" id="9913-ENSBTAP00000026442"/>
<dbReference type="Ensembl" id="ENSBTAT00000026442.6">
    <property type="protein sequence ID" value="ENSBTAP00000026442.5"/>
    <property type="gene ID" value="ENSBTAG00000019846.6"/>
</dbReference>
<dbReference type="GeneID" id="511380"/>
<dbReference type="KEGG" id="bta:511380"/>
<dbReference type="CTD" id="121642"/>
<dbReference type="VEuPathDB" id="HostDB:ENSBTAG00000019846"/>
<dbReference type="VGNC" id="VGNC:25833">
    <property type="gene designation" value="ALKBH2"/>
</dbReference>
<dbReference type="eggNOG" id="ENOG502QTDK">
    <property type="taxonomic scope" value="Eukaryota"/>
</dbReference>
<dbReference type="GeneTree" id="ENSGT00940000159009"/>
<dbReference type="InParanoid" id="Q58DM4"/>
<dbReference type="OMA" id="TQHHWQH"/>
<dbReference type="OrthoDB" id="445341at2759"/>
<dbReference type="Proteomes" id="UP000009136">
    <property type="component" value="Chromosome 17"/>
</dbReference>
<dbReference type="Bgee" id="ENSBTAG00000019846">
    <property type="expression patterns" value="Expressed in oocyte and 104 other cell types or tissues"/>
</dbReference>
<dbReference type="GO" id="GO:0005730">
    <property type="term" value="C:nucleolus"/>
    <property type="evidence" value="ECO:0007669"/>
    <property type="project" value="UniProtKB-SubCell"/>
</dbReference>
<dbReference type="GO" id="GO:0005654">
    <property type="term" value="C:nucleoplasm"/>
    <property type="evidence" value="ECO:0007669"/>
    <property type="project" value="UniProtKB-SubCell"/>
</dbReference>
<dbReference type="GO" id="GO:0035516">
    <property type="term" value="F:broad specificity oxidative DNA demethylase activity"/>
    <property type="evidence" value="ECO:0000250"/>
    <property type="project" value="UniProtKB"/>
</dbReference>
<dbReference type="GO" id="GO:0051747">
    <property type="term" value="F:cytosine C-5 DNA demethylase activity"/>
    <property type="evidence" value="ECO:0000250"/>
    <property type="project" value="UniProtKB"/>
</dbReference>
<dbReference type="GO" id="GO:0008198">
    <property type="term" value="F:ferrous iron binding"/>
    <property type="evidence" value="ECO:0000250"/>
    <property type="project" value="UniProtKB"/>
</dbReference>
<dbReference type="GO" id="GO:0000182">
    <property type="term" value="F:rDNA binding"/>
    <property type="evidence" value="ECO:0007669"/>
    <property type="project" value="Ensembl"/>
</dbReference>
<dbReference type="GO" id="GO:0006307">
    <property type="term" value="P:DNA alkylation repair"/>
    <property type="evidence" value="ECO:0000250"/>
    <property type="project" value="UniProtKB"/>
</dbReference>
<dbReference type="FunFam" id="2.60.120.590:FF:000004">
    <property type="entry name" value="DNA oxidative demethylase ALKBH2"/>
    <property type="match status" value="1"/>
</dbReference>
<dbReference type="Gene3D" id="2.60.120.590">
    <property type="entry name" value="Alpha-ketoglutarate-dependent dioxygenase AlkB-like"/>
    <property type="match status" value="1"/>
</dbReference>
<dbReference type="InterPro" id="IPR027450">
    <property type="entry name" value="AlkB-like"/>
</dbReference>
<dbReference type="InterPro" id="IPR037151">
    <property type="entry name" value="AlkB-like_sf"/>
</dbReference>
<dbReference type="InterPro" id="IPR032852">
    <property type="entry name" value="ALKBH2"/>
</dbReference>
<dbReference type="InterPro" id="IPR005123">
    <property type="entry name" value="Oxoglu/Fe-dep_dioxygenase_dom"/>
</dbReference>
<dbReference type="PANTHER" id="PTHR31573">
    <property type="entry name" value="ALPHA-KETOGLUTARATE-DEPENDENT DIOXYGENASE ALKB HOMOLOG 2"/>
    <property type="match status" value="1"/>
</dbReference>
<dbReference type="PANTHER" id="PTHR31573:SF1">
    <property type="entry name" value="DNA OXIDATIVE DEMETHYLASE ALKBH2"/>
    <property type="match status" value="1"/>
</dbReference>
<dbReference type="Pfam" id="PF13532">
    <property type="entry name" value="2OG-FeII_Oxy_2"/>
    <property type="match status" value="1"/>
</dbReference>
<dbReference type="SUPFAM" id="SSF51197">
    <property type="entry name" value="Clavaminate synthase-like"/>
    <property type="match status" value="1"/>
</dbReference>
<dbReference type="PROSITE" id="PS51471">
    <property type="entry name" value="FE2OG_OXY"/>
    <property type="match status" value="1"/>
</dbReference>
<reference key="1">
    <citation type="journal article" date="2005" name="BMC Genomics">
        <title>Characterization of 954 bovine full-CDS cDNA sequences.</title>
        <authorList>
            <person name="Harhay G.P."/>
            <person name="Sonstegard T.S."/>
            <person name="Keele J.W."/>
            <person name="Heaton M.P."/>
            <person name="Clawson M.L."/>
            <person name="Snelling W.M."/>
            <person name="Wiedmann R.T."/>
            <person name="Van Tassell C.P."/>
            <person name="Smith T.P.L."/>
        </authorList>
    </citation>
    <scope>NUCLEOTIDE SEQUENCE [LARGE SCALE MRNA]</scope>
</reference>
<reference key="2">
    <citation type="submission" date="2006-08" db="EMBL/GenBank/DDBJ databases">
        <authorList>
            <consortium name="NIH - Mammalian Gene Collection (MGC) project"/>
        </authorList>
    </citation>
    <scope>NUCLEOTIDE SEQUENCE [LARGE SCALE MRNA]</scope>
    <source>
        <strain>Hereford</strain>
        <tissue>Fetal liver</tissue>
    </source>
</reference>
<organism>
    <name type="scientific">Bos taurus</name>
    <name type="common">Bovine</name>
    <dbReference type="NCBI Taxonomy" id="9913"/>
    <lineage>
        <taxon>Eukaryota</taxon>
        <taxon>Metazoa</taxon>
        <taxon>Chordata</taxon>
        <taxon>Craniata</taxon>
        <taxon>Vertebrata</taxon>
        <taxon>Euteleostomi</taxon>
        <taxon>Mammalia</taxon>
        <taxon>Eutheria</taxon>
        <taxon>Laurasiatheria</taxon>
        <taxon>Artiodactyla</taxon>
        <taxon>Ruminantia</taxon>
        <taxon>Pecora</taxon>
        <taxon>Bovidae</taxon>
        <taxon>Bovinae</taxon>
        <taxon>Bos</taxon>
    </lineage>
</organism>
<gene>
    <name type="primary">ALKBH2</name>
    <name type="synonym">ABH2</name>
</gene>
<evidence type="ECO:0000250" key="1">
    <source>
        <dbReference type="UniProtKB" id="Q6NS38"/>
    </source>
</evidence>
<evidence type="ECO:0000255" key="2">
    <source>
        <dbReference type="PROSITE-ProRule" id="PRU00805"/>
    </source>
</evidence>
<evidence type="ECO:0000256" key="3">
    <source>
        <dbReference type="SAM" id="MobiDB-lite"/>
    </source>
</evidence>
<evidence type="ECO:0000305" key="4"/>
<feature type="chain" id="PRO_0000239274" description="DNA oxidative demethylase ALKBH2">
    <location>
        <begin position="1"/>
        <end position="278"/>
    </location>
</feature>
<feature type="domain" description="Fe2OG dioxygenase" evidence="2">
    <location>
        <begin position="151"/>
        <end position="256"/>
    </location>
</feature>
<feature type="region of interest" description="Disordered" evidence="3">
    <location>
        <begin position="1"/>
        <end position="49"/>
    </location>
</feature>
<feature type="short sequence motif" description="PCNA-binding" evidence="1">
    <location>
        <begin position="3"/>
        <end position="7"/>
    </location>
</feature>
<feature type="binding site" evidence="1">
    <location>
        <begin position="101"/>
        <end position="103"/>
    </location>
    <ligand>
        <name>substrate</name>
    </ligand>
</feature>
<feature type="binding site" evidence="1">
    <location>
        <begin position="121"/>
        <end position="123"/>
    </location>
    <ligand>
        <name>substrate</name>
    </ligand>
</feature>
<feature type="binding site" evidence="1">
    <location>
        <position position="158"/>
    </location>
    <ligand>
        <name>2-oxoglutarate</name>
        <dbReference type="ChEBI" id="CHEBI:16810"/>
    </ligand>
</feature>
<feature type="binding site" evidence="1">
    <location>
        <position position="160"/>
    </location>
    <ligand>
        <name>2-oxoglutarate</name>
        <dbReference type="ChEBI" id="CHEBI:16810"/>
    </ligand>
</feature>
<feature type="binding site" evidence="1">
    <location>
        <position position="170"/>
    </location>
    <ligand>
        <name>2-oxoglutarate</name>
        <dbReference type="ChEBI" id="CHEBI:16810"/>
    </ligand>
</feature>
<feature type="binding site" evidence="2">
    <location>
        <position position="170"/>
    </location>
    <ligand>
        <name>Fe cation</name>
        <dbReference type="ChEBI" id="CHEBI:24875"/>
        <note>catalytic</note>
    </ligand>
</feature>
<feature type="binding site" evidence="2">
    <location>
        <position position="172"/>
    </location>
    <ligand>
        <name>Fe cation</name>
        <dbReference type="ChEBI" id="CHEBI:24875"/>
        <note>catalytic</note>
    </ligand>
</feature>
<feature type="binding site" evidence="1">
    <location>
        <position position="173"/>
    </location>
    <ligand>
        <name>substrate</name>
    </ligand>
</feature>
<feature type="binding site" evidence="1">
    <location>
        <position position="235"/>
    </location>
    <ligand>
        <name>2-oxoglutarate</name>
        <dbReference type="ChEBI" id="CHEBI:16810"/>
    </ligand>
</feature>
<feature type="binding site" evidence="2">
    <location>
        <position position="235"/>
    </location>
    <ligand>
        <name>Fe cation</name>
        <dbReference type="ChEBI" id="CHEBI:24875"/>
        <note>catalytic</note>
    </ligand>
</feature>
<feature type="binding site" evidence="1">
    <location>
        <position position="247"/>
    </location>
    <ligand>
        <name>2-oxoglutarate</name>
        <dbReference type="ChEBI" id="CHEBI:16810"/>
    </ligand>
</feature>
<feature type="binding site" evidence="1">
    <location>
        <position position="251"/>
    </location>
    <ligand>
        <name>2-oxoglutarate</name>
        <dbReference type="ChEBI" id="CHEBI:16810"/>
    </ligand>
</feature>
<feature type="binding site" evidence="1">
    <location>
        <position position="253"/>
    </location>
    <ligand>
        <name>2-oxoglutarate</name>
        <dbReference type="ChEBI" id="CHEBI:16810"/>
    </ligand>
</feature>
<sequence length="278" mass="31053">MDRFLVKGAVGSLKRRMEQEQTGGGPAGLAEEEGNSKKNPRRAAPGNGVDSAGLTWGRIRAEGLNCDYTILFGKAEADEIFQELEKEVEYFTGALARVQVFGKWHSVPRKQATYGDTGLTYTFSGLTLSPKPWIPVLERVRDRVSLVTGQTFNFVLINRYKDGQDHIGEHRDDERELALGSPIASVSFGACRDFVFRHKDSRGKHPSRRLEVVRLQLAHGSLLMMNHPTNTHWYHSLPVRKKVLAPRVNLTFRKILPTTKRTTLLTASASVGSFALHS</sequence>
<comment type="function">
    <text evidence="1">Dioxygenase that repairs alkylated nucleic acid bases by direct reversal oxidative dealkylation. Can process both double-stranded (ds) and single-stranded (ss) DNA substrates, with a strong preference for dsDNA (By similarity). Uses molecular oxygen, 2-oxoglutarate and iron as cofactors to oxidize the alkyl groups that are subsequently released as aldehydes, regenerating the undamaged bases. Probes the base pair stability, locates a weakened base pair and flips the damaged base to accommodate the lesion in its active site for efficient catalysis (By similarity). Repairs monoalkylated bases, specifically N1-methyladenine and N3-methylcytosine, as well as higher order alkyl adducts such as bases modified with exocyclic bridged adducts known as etheno adducts including 1,N6-ethenoadenine, 3,N4-ethenocytosine and 1,N2-ethenoguanine (By similarity). Acts as a gatekeeper of genomic integrity under alkylation stress. Efficiently repairs alkylated lesions in ribosomal DNA (rDNA). These lesions can cause ss- and dsDNA strand breaks that severely impair rDNA transcription (By similarity). In a response mechanism to DNA damage, associates with PCNA at replication forks to repair alkylated adducts prior to replication (By similarity).</text>
</comment>
<comment type="catalytic activity">
    <reaction evidence="1">
        <text>a methylated nucleobase within DNA + 2-oxoglutarate + O2 = a nucleobase within DNA + formaldehyde + succinate + CO2</text>
        <dbReference type="Rhea" id="RHEA:30299"/>
        <dbReference type="Rhea" id="RHEA-COMP:12192"/>
        <dbReference type="Rhea" id="RHEA-COMP:12193"/>
        <dbReference type="ChEBI" id="CHEBI:15379"/>
        <dbReference type="ChEBI" id="CHEBI:16526"/>
        <dbReference type="ChEBI" id="CHEBI:16810"/>
        <dbReference type="ChEBI" id="CHEBI:16842"/>
        <dbReference type="ChEBI" id="CHEBI:30031"/>
        <dbReference type="ChEBI" id="CHEBI:32875"/>
        <dbReference type="ChEBI" id="CHEBI:64428"/>
        <dbReference type="EC" id="1.14.11.33"/>
    </reaction>
    <physiologicalReaction direction="left-to-right" evidence="1">
        <dbReference type="Rhea" id="RHEA:30300"/>
    </physiologicalReaction>
</comment>
<comment type="catalytic activity">
    <reaction evidence="1">
        <text>an N(1)-methyl-2'-deoxyadenosine in double-stranded DNA + 2-oxoglutarate + O2 = a 2'-deoxyadenosine in double-stranded DNA + formaldehyde + succinate + CO2 + H(+)</text>
        <dbReference type="Rhea" id="RHEA:70443"/>
        <dbReference type="Rhea" id="RHEA-COMP:14236"/>
        <dbReference type="Rhea" id="RHEA-COMP:17897"/>
        <dbReference type="ChEBI" id="CHEBI:15378"/>
        <dbReference type="ChEBI" id="CHEBI:15379"/>
        <dbReference type="ChEBI" id="CHEBI:16526"/>
        <dbReference type="ChEBI" id="CHEBI:16810"/>
        <dbReference type="ChEBI" id="CHEBI:16842"/>
        <dbReference type="ChEBI" id="CHEBI:30031"/>
        <dbReference type="ChEBI" id="CHEBI:90615"/>
        <dbReference type="ChEBI" id="CHEBI:139096"/>
    </reaction>
    <physiologicalReaction direction="left-to-right" evidence="1">
        <dbReference type="Rhea" id="RHEA:70444"/>
    </physiologicalReaction>
</comment>
<comment type="catalytic activity">
    <reaction evidence="1">
        <text>an N(1)-methyl-2'-deoxyadenosine in single-stranded DNA + 2-oxoglutarate + O2 = a 2'-deoxyadenosine in single-stranded DNA + formaldehyde + succinate + CO2 + H(+)</text>
        <dbReference type="Rhea" id="RHEA:70447"/>
        <dbReference type="Rhea" id="RHEA-COMP:17895"/>
        <dbReference type="Rhea" id="RHEA-COMP:17896"/>
        <dbReference type="ChEBI" id="CHEBI:15378"/>
        <dbReference type="ChEBI" id="CHEBI:15379"/>
        <dbReference type="ChEBI" id="CHEBI:16526"/>
        <dbReference type="ChEBI" id="CHEBI:16810"/>
        <dbReference type="ChEBI" id="CHEBI:16842"/>
        <dbReference type="ChEBI" id="CHEBI:30031"/>
        <dbReference type="ChEBI" id="CHEBI:90615"/>
        <dbReference type="ChEBI" id="CHEBI:139096"/>
    </reaction>
    <physiologicalReaction direction="left-to-right" evidence="1">
        <dbReference type="Rhea" id="RHEA:70448"/>
    </physiologicalReaction>
</comment>
<comment type="catalytic activity">
    <reaction evidence="1">
        <text>an N(3)-methyl-2'-deoxycytidine in double-stranded DNA + 2-oxoglutarate + O2 = a 2'-deoxycytidine in double-stranded DNA + formaldehyde + succinate + CO2 + H(+)</text>
        <dbReference type="Rhea" id="RHEA:70439"/>
        <dbReference type="Rhea" id="RHEA-COMP:14237"/>
        <dbReference type="Rhea" id="RHEA-COMP:17070"/>
        <dbReference type="ChEBI" id="CHEBI:15378"/>
        <dbReference type="ChEBI" id="CHEBI:15379"/>
        <dbReference type="ChEBI" id="CHEBI:16526"/>
        <dbReference type="ChEBI" id="CHEBI:16810"/>
        <dbReference type="ChEBI" id="CHEBI:16842"/>
        <dbReference type="ChEBI" id="CHEBI:30031"/>
        <dbReference type="ChEBI" id="CHEBI:85452"/>
        <dbReference type="ChEBI" id="CHEBI:139075"/>
    </reaction>
    <physiologicalReaction direction="left-to-right" evidence="1">
        <dbReference type="Rhea" id="RHEA:70440"/>
    </physiologicalReaction>
</comment>
<comment type="catalytic activity">
    <reaction evidence="1">
        <text>an N(3)-methyl-2'-deoxycytidine in single-stranded DNA + 2-oxoglutarate + O2 = a 2'-deoxycytidine in single-stranded DNA + formaldehyde + succinate + CO2 + H(+)</text>
        <dbReference type="Rhea" id="RHEA:70435"/>
        <dbReference type="Rhea" id="RHEA-COMP:12846"/>
        <dbReference type="Rhea" id="RHEA-COMP:17894"/>
        <dbReference type="ChEBI" id="CHEBI:15378"/>
        <dbReference type="ChEBI" id="CHEBI:15379"/>
        <dbReference type="ChEBI" id="CHEBI:16526"/>
        <dbReference type="ChEBI" id="CHEBI:16810"/>
        <dbReference type="ChEBI" id="CHEBI:16842"/>
        <dbReference type="ChEBI" id="CHEBI:30031"/>
        <dbReference type="ChEBI" id="CHEBI:85452"/>
        <dbReference type="ChEBI" id="CHEBI:139075"/>
    </reaction>
    <physiologicalReaction direction="left-to-right" evidence="1">
        <dbReference type="Rhea" id="RHEA:70436"/>
    </physiologicalReaction>
</comment>
<comment type="catalytic activity">
    <reaction evidence="1">
        <text>a 1,N(6)-etheno-2'-deoxyadenosine in double-stranded DNA + 2-oxoglutarate + O2 + H2O = a 2'-deoxyadenosine in double-stranded DNA + glyoxal + succinate + CO2</text>
        <dbReference type="Rhea" id="RHEA:70463"/>
        <dbReference type="Rhea" id="RHEA-COMP:17897"/>
        <dbReference type="Rhea" id="RHEA-COMP:17903"/>
        <dbReference type="ChEBI" id="CHEBI:15377"/>
        <dbReference type="ChEBI" id="CHEBI:15379"/>
        <dbReference type="ChEBI" id="CHEBI:16526"/>
        <dbReference type="ChEBI" id="CHEBI:16810"/>
        <dbReference type="ChEBI" id="CHEBI:30031"/>
        <dbReference type="ChEBI" id="CHEBI:34779"/>
        <dbReference type="ChEBI" id="CHEBI:90615"/>
        <dbReference type="ChEBI" id="CHEBI:189583"/>
    </reaction>
    <physiologicalReaction direction="left-to-right" evidence="1">
        <dbReference type="Rhea" id="RHEA:70464"/>
    </physiologicalReaction>
</comment>
<comment type="catalytic activity">
    <reaction evidence="1">
        <text>a 1,N(6)-etheno-2'-deoxyadenosine in single-stranded DNA + 2-oxoglutarate + O2 + H2O = a 2'-deoxyadenosine in single-stranded DNA + glyoxal + succinate + CO2</text>
        <dbReference type="Rhea" id="RHEA:70459"/>
        <dbReference type="Rhea" id="RHEA-COMP:17896"/>
        <dbReference type="Rhea" id="RHEA-COMP:17904"/>
        <dbReference type="ChEBI" id="CHEBI:15377"/>
        <dbReference type="ChEBI" id="CHEBI:15379"/>
        <dbReference type="ChEBI" id="CHEBI:16526"/>
        <dbReference type="ChEBI" id="CHEBI:16810"/>
        <dbReference type="ChEBI" id="CHEBI:30031"/>
        <dbReference type="ChEBI" id="CHEBI:34779"/>
        <dbReference type="ChEBI" id="CHEBI:90615"/>
        <dbReference type="ChEBI" id="CHEBI:189583"/>
    </reaction>
    <physiologicalReaction direction="left-to-right" evidence="1">
        <dbReference type="Rhea" id="RHEA:70460"/>
    </physiologicalReaction>
</comment>
<comment type="catalytic activity">
    <reaction evidence="1">
        <text>a 3,N(4)-etheno-2'-deoxycytidine in double-stranded DNA + 2-oxoglutarate + O2 + H2O = a 2'-deoxycytidine in double-stranded DNA + glyoxal + succinate + CO2</text>
        <dbReference type="Rhea" id="RHEA:70467"/>
        <dbReference type="Rhea" id="RHEA-COMP:17070"/>
        <dbReference type="Rhea" id="RHEA-COMP:17905"/>
        <dbReference type="ChEBI" id="CHEBI:15377"/>
        <dbReference type="ChEBI" id="CHEBI:15379"/>
        <dbReference type="ChEBI" id="CHEBI:16526"/>
        <dbReference type="ChEBI" id="CHEBI:16810"/>
        <dbReference type="ChEBI" id="CHEBI:30031"/>
        <dbReference type="ChEBI" id="CHEBI:34779"/>
        <dbReference type="ChEBI" id="CHEBI:85452"/>
        <dbReference type="ChEBI" id="CHEBI:189585"/>
    </reaction>
    <physiologicalReaction direction="left-to-right" evidence="1">
        <dbReference type="Rhea" id="RHEA:70468"/>
    </physiologicalReaction>
</comment>
<comment type="catalytic activity">
    <reaction evidence="1">
        <text>a 3,N(4)-etheno-2'-deoxycytidine in single-stranded DNA + 2-oxoglutarate + O2 + H2O = a 2'-deoxycytidine in single-stranded DNA + glyoxal + succinate + CO2</text>
        <dbReference type="Rhea" id="RHEA:70471"/>
        <dbReference type="Rhea" id="RHEA-COMP:12846"/>
        <dbReference type="Rhea" id="RHEA-COMP:17906"/>
        <dbReference type="ChEBI" id="CHEBI:15377"/>
        <dbReference type="ChEBI" id="CHEBI:15379"/>
        <dbReference type="ChEBI" id="CHEBI:16526"/>
        <dbReference type="ChEBI" id="CHEBI:16810"/>
        <dbReference type="ChEBI" id="CHEBI:30031"/>
        <dbReference type="ChEBI" id="CHEBI:34779"/>
        <dbReference type="ChEBI" id="CHEBI:85452"/>
        <dbReference type="ChEBI" id="CHEBI:189585"/>
    </reaction>
    <physiologicalReaction direction="left-to-right" evidence="1">
        <dbReference type="Rhea" id="RHEA:70472"/>
    </physiologicalReaction>
</comment>
<comment type="catalytic activity">
    <reaction evidence="1">
        <text>a 1,N(2)-etheno-2'-deoxyguanosine in double-stranded DNA + 2-oxoglutarate + O2 + H2O = a 2'-deoxyguanosine in double-stranded DNA + glyoxal + succinate + CO2</text>
        <dbReference type="Rhea" id="RHEA:70487"/>
        <dbReference type="Rhea" id="RHEA-COMP:17910"/>
        <dbReference type="Rhea" id="RHEA-COMP:17912"/>
        <dbReference type="ChEBI" id="CHEBI:15377"/>
        <dbReference type="ChEBI" id="CHEBI:15379"/>
        <dbReference type="ChEBI" id="CHEBI:16526"/>
        <dbReference type="ChEBI" id="CHEBI:16810"/>
        <dbReference type="ChEBI" id="CHEBI:30031"/>
        <dbReference type="ChEBI" id="CHEBI:34779"/>
        <dbReference type="ChEBI" id="CHEBI:85445"/>
        <dbReference type="ChEBI" id="CHEBI:189586"/>
    </reaction>
    <physiologicalReaction direction="left-to-right" evidence="1">
        <dbReference type="Rhea" id="RHEA:70488"/>
    </physiologicalReaction>
</comment>
<comment type="cofactor">
    <cofactor evidence="2">
        <name>Fe(2+)</name>
        <dbReference type="ChEBI" id="CHEBI:29033"/>
    </cofactor>
    <text evidence="2">Binds 1 Fe(2+) ion per subunit.</text>
</comment>
<comment type="activity regulation">
    <text evidence="1">Activated by ascorbate and magnesium ions.</text>
</comment>
<comment type="subunit">
    <text evidence="1">Interacts with PCNA homotrimer; this interaction is enhanced during the S-phase of the cell cycle. Interacts with nucleolar proteins NCL, UBTF and NPM1. Interacts with XRCC5-XRCC6 heterodimer.</text>
</comment>
<comment type="subcellular location">
    <subcellularLocation>
        <location evidence="1">Nucleus</location>
    </subcellularLocation>
    <subcellularLocation>
        <location evidence="1">Nucleus</location>
        <location evidence="1">Nucleolus</location>
    </subcellularLocation>
    <subcellularLocation>
        <location evidence="1">Nucleus</location>
        <location evidence="1">Nucleoplasm</location>
    </subcellularLocation>
    <text evidence="1">Relocates to the replication foci during S-phase.</text>
</comment>
<comment type="domain">
    <text evidence="1">The PCNA-binding motif (AlkB homolog 2 PCNA-interacting motif, APIM), mediates the colocalization of ALKBH2 with PCNA at the replication foci, coordinating the repair of alkylated DNA damage with DNA replication.</text>
</comment>
<comment type="similarity">
    <text evidence="4">Belongs to the alkB family.</text>
</comment>
<accession>Q58DM4</accession>
<accession>Q0VCG6</accession>
<protein>
    <recommendedName>
        <fullName>DNA oxidative demethylase ALKBH2</fullName>
        <ecNumber evidence="1">1.14.11.33</ecNumber>
    </recommendedName>
    <alternativeName>
        <fullName>Alkylated DNA repair protein alkB homolog 2</fullName>
    </alternativeName>
    <alternativeName>
        <fullName>Alpha-ketoglutarate-dependent dioxygenase alkB homolog 2</fullName>
    </alternativeName>
</protein>
<proteinExistence type="evidence at transcript level"/>